<comment type="subcellular location">
    <subcellularLocation>
        <location evidence="1">Cytoplasm</location>
    </subcellularLocation>
</comment>
<comment type="similarity">
    <text evidence="1">Belongs to the UPF0298 family.</text>
</comment>
<dbReference type="EMBL" id="CP000764">
    <property type="protein sequence ID" value="ABS22869.1"/>
    <property type="molecule type" value="Genomic_DNA"/>
</dbReference>
<dbReference type="RefSeq" id="WP_012095083.1">
    <property type="nucleotide sequence ID" value="NC_009674.1"/>
</dbReference>
<dbReference type="SMR" id="A7GRW1"/>
<dbReference type="STRING" id="315749.Bcer98_2635"/>
<dbReference type="GeneID" id="33897890"/>
<dbReference type="KEGG" id="bcy:Bcer98_2635"/>
<dbReference type="eggNOG" id="COG4471">
    <property type="taxonomic scope" value="Bacteria"/>
</dbReference>
<dbReference type="HOGENOM" id="CLU_159890_2_0_9"/>
<dbReference type="OrthoDB" id="2990788at2"/>
<dbReference type="Proteomes" id="UP000002300">
    <property type="component" value="Chromosome"/>
</dbReference>
<dbReference type="GO" id="GO:0005737">
    <property type="term" value="C:cytoplasm"/>
    <property type="evidence" value="ECO:0007669"/>
    <property type="project" value="UniProtKB-SubCell"/>
</dbReference>
<dbReference type="HAMAP" id="MF_01126">
    <property type="entry name" value="UPF0298"/>
    <property type="match status" value="1"/>
</dbReference>
<dbReference type="InterPro" id="IPR016979">
    <property type="entry name" value="DUF2129"/>
</dbReference>
<dbReference type="NCBIfam" id="NF002777">
    <property type="entry name" value="PRK02886.1"/>
    <property type="match status" value="1"/>
</dbReference>
<dbReference type="Pfam" id="PF09902">
    <property type="entry name" value="DUF2129"/>
    <property type="match status" value="1"/>
</dbReference>
<dbReference type="PIRSF" id="PIRSF031653">
    <property type="entry name" value="UCP031653"/>
    <property type="match status" value="1"/>
</dbReference>
<sequence length="88" mass="10785">MFGQRQSLIVYLHSLKHAKILRKYGNIHYISKRLKYAVVYCDMDQLEHMMHKLNKLPFVKRIEQSYRPFLKTEFENSRPDRAKEYDYS</sequence>
<gene>
    <name type="ordered locus">Bcer98_2635</name>
</gene>
<accession>A7GRW1</accession>
<evidence type="ECO:0000255" key="1">
    <source>
        <dbReference type="HAMAP-Rule" id="MF_01126"/>
    </source>
</evidence>
<protein>
    <recommendedName>
        <fullName evidence="1">UPF0298 protein Bcer98_2635</fullName>
    </recommendedName>
</protein>
<feature type="chain" id="PRO_1000085014" description="UPF0298 protein Bcer98_2635">
    <location>
        <begin position="1"/>
        <end position="88"/>
    </location>
</feature>
<keyword id="KW-0963">Cytoplasm</keyword>
<proteinExistence type="inferred from homology"/>
<reference key="1">
    <citation type="journal article" date="2008" name="Chem. Biol. Interact.">
        <title>Extending the Bacillus cereus group genomics to putative food-borne pathogens of different toxicity.</title>
        <authorList>
            <person name="Lapidus A."/>
            <person name="Goltsman E."/>
            <person name="Auger S."/>
            <person name="Galleron N."/>
            <person name="Segurens B."/>
            <person name="Dossat C."/>
            <person name="Land M.L."/>
            <person name="Broussolle V."/>
            <person name="Brillard J."/>
            <person name="Guinebretiere M.-H."/>
            <person name="Sanchis V."/>
            <person name="Nguen-the C."/>
            <person name="Lereclus D."/>
            <person name="Richardson P."/>
            <person name="Wincker P."/>
            <person name="Weissenbach J."/>
            <person name="Ehrlich S.D."/>
            <person name="Sorokin A."/>
        </authorList>
    </citation>
    <scope>NUCLEOTIDE SEQUENCE [LARGE SCALE GENOMIC DNA]</scope>
    <source>
        <strain>DSM 22905 / CIP 110041 / 391-98 / NVH 391-98</strain>
    </source>
</reference>
<name>Y2635_BACCN</name>
<organism>
    <name type="scientific">Bacillus cytotoxicus (strain DSM 22905 / CIP 110041 / 391-98 / NVH 391-98)</name>
    <dbReference type="NCBI Taxonomy" id="315749"/>
    <lineage>
        <taxon>Bacteria</taxon>
        <taxon>Bacillati</taxon>
        <taxon>Bacillota</taxon>
        <taxon>Bacilli</taxon>
        <taxon>Bacillales</taxon>
        <taxon>Bacillaceae</taxon>
        <taxon>Bacillus</taxon>
        <taxon>Bacillus cereus group</taxon>
    </lineage>
</organism>